<protein>
    <recommendedName>
        <fullName evidence="3">Dermaseptin-A3</fullName>
        <shortName evidence="3">DRS-A3</shortName>
    </recommendedName>
    <alternativeName>
        <fullName evidence="4">Dermaseptin AA-3-1</fullName>
    </alternativeName>
</protein>
<sequence>MAFLKKSLFLVLLLGLISLSICEEEKRENEVEEEQEDDEQSELRRSLWSKIKEMAATAGKAALNAVTGMVNQGEQ</sequence>
<feature type="signal peptide" evidence="2">
    <location>
        <begin position="1"/>
        <end position="22"/>
    </location>
</feature>
<feature type="propeptide" id="PRO_0000007065" evidence="5">
    <location>
        <begin position="23"/>
        <end position="43"/>
    </location>
</feature>
<feature type="peptide" id="PRO_0000007066" description="Dermaseptin-A3" evidence="6">
    <location>
        <begin position="46"/>
        <end position="72"/>
    </location>
</feature>
<feature type="propeptide" id="PRO_0000007067" evidence="5">
    <location>
        <begin position="74"/>
        <end position="75"/>
    </location>
</feature>
<feature type="modified residue" description="Glutamine amide" evidence="6">
    <location>
        <position position="72"/>
    </location>
</feature>
<accession>O93223</accession>
<evidence type="ECO:0000250" key="1"/>
<evidence type="ECO:0000255" key="2"/>
<evidence type="ECO:0000303" key="3">
    <source>
    </source>
</evidence>
<evidence type="ECO:0000303" key="4">
    <source>
    </source>
</evidence>
<evidence type="ECO:0000305" key="5"/>
<evidence type="ECO:0000305" key="6">
    <source>
    </source>
</evidence>
<comment type="function">
    <text evidence="1">Possesses a potent antimicrobial activity against Gram-positive and Gram-negative bacteria. Probably acts by disturbing membrane functions with its amphipathic structure (By similarity).</text>
</comment>
<comment type="subcellular location">
    <subcellularLocation>
        <location evidence="6">Secreted</location>
    </subcellularLocation>
</comment>
<comment type="tissue specificity">
    <text evidence="6">Expressed by the skin glands.</text>
</comment>
<comment type="similarity">
    <text evidence="5">Belongs to the frog skin active peptide (FSAP) family. Dermaseptin subfamily.</text>
</comment>
<comment type="online information" name="The antimicrobial peptide database">
    <link uri="https://wangapd3.com/database/query_output.php?ID=0963"/>
</comment>
<reference key="1">
    <citation type="journal article" date="1998" name="Biochim. Biophys. Acta">
        <title>Cloning of cDNAs encoding new peptides of the dermaseptin-family.</title>
        <authorList>
            <person name="Wechselberger C."/>
        </authorList>
    </citation>
    <scope>NUCLEOTIDE SEQUENCE [MRNA]</scope>
    <scope>AMIDATION AT GLN-72</scope>
    <source>
        <tissue>Skin</tissue>
    </source>
</reference>
<reference key="2">
    <citation type="journal article" date="2008" name="Peptides">
        <title>A consistent nomenclature of antimicrobial peptides isolated from frogs of the subfamily Phyllomedusinae.</title>
        <authorList>
            <person name="Amiche M."/>
            <person name="Ladram A."/>
            <person name="Nicolas P."/>
        </authorList>
    </citation>
    <scope>NOMENCLATURE</scope>
</reference>
<dbReference type="EMBL" id="AJ005185">
    <property type="protein sequence ID" value="CAA06422.1"/>
    <property type="molecule type" value="mRNA"/>
</dbReference>
<dbReference type="GO" id="GO:0005576">
    <property type="term" value="C:extracellular region"/>
    <property type="evidence" value="ECO:0007669"/>
    <property type="project" value="UniProtKB-SubCell"/>
</dbReference>
<dbReference type="GO" id="GO:0042742">
    <property type="term" value="P:defense response to bacterium"/>
    <property type="evidence" value="ECO:0007669"/>
    <property type="project" value="UniProtKB-KW"/>
</dbReference>
<dbReference type="InterPro" id="IPR022731">
    <property type="entry name" value="Dermaseptin_dom"/>
</dbReference>
<dbReference type="InterPro" id="IPR004275">
    <property type="entry name" value="Frog_antimicrobial_propeptide"/>
</dbReference>
<dbReference type="InterPro" id="IPR016322">
    <property type="entry name" value="FSAP"/>
</dbReference>
<dbReference type="Pfam" id="PF12121">
    <property type="entry name" value="DD_K"/>
    <property type="match status" value="1"/>
</dbReference>
<dbReference type="Pfam" id="PF03032">
    <property type="entry name" value="FSAP_sig_propep"/>
    <property type="match status" value="1"/>
</dbReference>
<dbReference type="PIRSF" id="PIRSF001822">
    <property type="entry name" value="Dermaseptin_precursor"/>
    <property type="match status" value="1"/>
</dbReference>
<proteinExistence type="evidence at protein level"/>
<keyword id="KW-0027">Amidation</keyword>
<keyword id="KW-0878">Amphibian defense peptide</keyword>
<keyword id="KW-0044">Antibiotic</keyword>
<keyword id="KW-0929">Antimicrobial</keyword>
<keyword id="KW-0165">Cleavage on pair of basic residues</keyword>
<keyword id="KW-0964">Secreted</keyword>
<keyword id="KW-0732">Signal</keyword>
<organism>
    <name type="scientific">Agalychnis annae</name>
    <name type="common">Blue-sided leaf frog</name>
    <name type="synonym">Phyllomedusa annae</name>
    <dbReference type="NCBI Taxonomy" id="75990"/>
    <lineage>
        <taxon>Eukaryota</taxon>
        <taxon>Metazoa</taxon>
        <taxon>Chordata</taxon>
        <taxon>Craniata</taxon>
        <taxon>Vertebrata</taxon>
        <taxon>Euteleostomi</taxon>
        <taxon>Amphibia</taxon>
        <taxon>Batrachia</taxon>
        <taxon>Anura</taxon>
        <taxon>Neobatrachia</taxon>
        <taxon>Hyloidea</taxon>
        <taxon>Hylidae</taxon>
        <taxon>Phyllomedusinae</taxon>
        <taxon>Agalychnis</taxon>
    </lineage>
</organism>
<name>DRS3_AGAAN</name>